<feature type="chain" id="PRO_1000188115" description="Small ribosomal subunit biogenesis GTPase RsgA">
    <location>
        <begin position="1"/>
        <end position="312"/>
    </location>
</feature>
<feature type="domain" description="CP-type G" evidence="2">
    <location>
        <begin position="86"/>
        <end position="245"/>
    </location>
</feature>
<feature type="binding site" evidence="1">
    <location>
        <begin position="135"/>
        <end position="138"/>
    </location>
    <ligand>
        <name>GTP</name>
        <dbReference type="ChEBI" id="CHEBI:37565"/>
    </ligand>
</feature>
<feature type="binding site" evidence="1">
    <location>
        <begin position="187"/>
        <end position="195"/>
    </location>
    <ligand>
        <name>GTP</name>
        <dbReference type="ChEBI" id="CHEBI:37565"/>
    </ligand>
</feature>
<feature type="binding site" evidence="1">
    <location>
        <position position="270"/>
    </location>
    <ligand>
        <name>Zn(2+)</name>
        <dbReference type="ChEBI" id="CHEBI:29105"/>
    </ligand>
</feature>
<feature type="binding site" evidence="1">
    <location>
        <position position="275"/>
    </location>
    <ligand>
        <name>Zn(2+)</name>
        <dbReference type="ChEBI" id="CHEBI:29105"/>
    </ligand>
</feature>
<feature type="binding site" evidence="1">
    <location>
        <position position="277"/>
    </location>
    <ligand>
        <name>Zn(2+)</name>
        <dbReference type="ChEBI" id="CHEBI:29105"/>
    </ligand>
</feature>
<feature type="binding site" evidence="1">
    <location>
        <position position="283"/>
    </location>
    <ligand>
        <name>Zn(2+)</name>
        <dbReference type="ChEBI" id="CHEBI:29105"/>
    </ligand>
</feature>
<evidence type="ECO:0000255" key="1">
    <source>
        <dbReference type="HAMAP-Rule" id="MF_01820"/>
    </source>
</evidence>
<evidence type="ECO:0000255" key="2">
    <source>
        <dbReference type="PROSITE-ProRule" id="PRU01058"/>
    </source>
</evidence>
<name>RSGA_PROM1</name>
<gene>
    <name evidence="1" type="primary">rsgA</name>
    <name type="ordered locus">NATL1_00181</name>
</gene>
<dbReference type="EC" id="3.6.1.-" evidence="1"/>
<dbReference type="EMBL" id="CP000553">
    <property type="protein sequence ID" value="ABM74582.1"/>
    <property type="molecule type" value="Genomic_DNA"/>
</dbReference>
<dbReference type="RefSeq" id="WP_011822820.1">
    <property type="nucleotide sequence ID" value="NC_008819.1"/>
</dbReference>
<dbReference type="SMR" id="A2BZC2"/>
<dbReference type="KEGG" id="pme:NATL1_00181"/>
<dbReference type="eggNOG" id="COG1162">
    <property type="taxonomic scope" value="Bacteria"/>
</dbReference>
<dbReference type="HOGENOM" id="CLU_033617_2_1_3"/>
<dbReference type="Proteomes" id="UP000002592">
    <property type="component" value="Chromosome"/>
</dbReference>
<dbReference type="GO" id="GO:0005737">
    <property type="term" value="C:cytoplasm"/>
    <property type="evidence" value="ECO:0007669"/>
    <property type="project" value="UniProtKB-SubCell"/>
</dbReference>
<dbReference type="GO" id="GO:0005525">
    <property type="term" value="F:GTP binding"/>
    <property type="evidence" value="ECO:0007669"/>
    <property type="project" value="UniProtKB-UniRule"/>
</dbReference>
<dbReference type="GO" id="GO:0003924">
    <property type="term" value="F:GTPase activity"/>
    <property type="evidence" value="ECO:0007669"/>
    <property type="project" value="UniProtKB-UniRule"/>
</dbReference>
<dbReference type="GO" id="GO:0046872">
    <property type="term" value="F:metal ion binding"/>
    <property type="evidence" value="ECO:0007669"/>
    <property type="project" value="UniProtKB-KW"/>
</dbReference>
<dbReference type="GO" id="GO:0019843">
    <property type="term" value="F:rRNA binding"/>
    <property type="evidence" value="ECO:0007669"/>
    <property type="project" value="UniProtKB-KW"/>
</dbReference>
<dbReference type="GO" id="GO:0042274">
    <property type="term" value="P:ribosomal small subunit biogenesis"/>
    <property type="evidence" value="ECO:0007669"/>
    <property type="project" value="UniProtKB-UniRule"/>
</dbReference>
<dbReference type="CDD" id="cd01854">
    <property type="entry name" value="YjeQ_EngC"/>
    <property type="match status" value="1"/>
</dbReference>
<dbReference type="Gene3D" id="3.40.50.300">
    <property type="entry name" value="P-loop containing nucleotide triphosphate hydrolases"/>
    <property type="match status" value="1"/>
</dbReference>
<dbReference type="Gene3D" id="1.10.40.50">
    <property type="entry name" value="Probable gtpase engc, domain 3"/>
    <property type="match status" value="1"/>
</dbReference>
<dbReference type="HAMAP" id="MF_01820">
    <property type="entry name" value="GTPase_RsgA"/>
    <property type="match status" value="1"/>
</dbReference>
<dbReference type="InterPro" id="IPR030378">
    <property type="entry name" value="G_CP_dom"/>
</dbReference>
<dbReference type="InterPro" id="IPR027417">
    <property type="entry name" value="P-loop_NTPase"/>
</dbReference>
<dbReference type="InterPro" id="IPR004881">
    <property type="entry name" value="Ribosome_biogen_GTPase_RsgA"/>
</dbReference>
<dbReference type="InterPro" id="IPR010914">
    <property type="entry name" value="RsgA_GTPase_dom"/>
</dbReference>
<dbReference type="NCBIfam" id="TIGR00157">
    <property type="entry name" value="ribosome small subunit-dependent GTPase A"/>
    <property type="match status" value="1"/>
</dbReference>
<dbReference type="PANTHER" id="PTHR32120">
    <property type="entry name" value="SMALL RIBOSOMAL SUBUNIT BIOGENESIS GTPASE RSGA"/>
    <property type="match status" value="1"/>
</dbReference>
<dbReference type="PANTHER" id="PTHR32120:SF11">
    <property type="entry name" value="SMALL RIBOSOMAL SUBUNIT BIOGENESIS GTPASE RSGA 1, MITOCHONDRIAL-RELATED"/>
    <property type="match status" value="1"/>
</dbReference>
<dbReference type="Pfam" id="PF03193">
    <property type="entry name" value="RsgA_GTPase"/>
    <property type="match status" value="1"/>
</dbReference>
<dbReference type="SUPFAM" id="SSF52540">
    <property type="entry name" value="P-loop containing nucleoside triphosphate hydrolases"/>
    <property type="match status" value="1"/>
</dbReference>
<dbReference type="PROSITE" id="PS50936">
    <property type="entry name" value="ENGC_GTPASE"/>
    <property type="match status" value="1"/>
</dbReference>
<dbReference type="PROSITE" id="PS51721">
    <property type="entry name" value="G_CP"/>
    <property type="match status" value="1"/>
</dbReference>
<comment type="function">
    <text evidence="1">One of several proteins that assist in the late maturation steps of the functional core of the 30S ribosomal subunit. Helps release RbfA from mature subunits. May play a role in the assembly of ribosomal proteins into the subunit. Circularly permuted GTPase that catalyzes slow GTP hydrolysis, GTPase activity is stimulated by the 30S ribosomal subunit.</text>
</comment>
<comment type="cofactor">
    <cofactor evidence="1">
        <name>Zn(2+)</name>
        <dbReference type="ChEBI" id="CHEBI:29105"/>
    </cofactor>
    <text evidence="1">Binds 1 zinc ion per subunit.</text>
</comment>
<comment type="subunit">
    <text evidence="1">Monomer. Associates with 30S ribosomal subunit, binds 16S rRNA.</text>
</comment>
<comment type="subcellular location">
    <subcellularLocation>
        <location evidence="1">Cytoplasm</location>
    </subcellularLocation>
</comment>
<comment type="similarity">
    <text evidence="1">Belongs to the TRAFAC class YlqF/YawG GTPase family. RsgA subfamily.</text>
</comment>
<keyword id="KW-0963">Cytoplasm</keyword>
<keyword id="KW-0342">GTP-binding</keyword>
<keyword id="KW-0378">Hydrolase</keyword>
<keyword id="KW-0479">Metal-binding</keyword>
<keyword id="KW-0547">Nucleotide-binding</keyword>
<keyword id="KW-0690">Ribosome biogenesis</keyword>
<keyword id="KW-0694">RNA-binding</keyword>
<keyword id="KW-0699">rRNA-binding</keyword>
<keyword id="KW-0862">Zinc</keyword>
<sequence>MNKNKSNKLKGIVVALKANFLIVEIDHKNFKDYSFDEFNGKIRLLCIRRSKLNYQGLFIDVGDIVGVESIDYKNKRAVVSDVEPRQSFLKRPAVANVTLVSICISADEPLFDMEQTSRFLLTAECANIEPLIILTKIDLITKNDLILYINKFKSWGYDCIPVSIHNSQGIDSLIERLRKTKLTVLAGPSGVGKTSLINHLIPTVSLPTSSVSKKLKRGTHTTRHVELFAIGNGSLLADTPGFNRPEIVCEPSDFAFLFPEFRTQLSNSQCKFRNCLHRDEPGCVIDKDLERYPFYRENLEEMINSPLPYQAG</sequence>
<protein>
    <recommendedName>
        <fullName evidence="1">Small ribosomal subunit biogenesis GTPase RsgA</fullName>
        <ecNumber evidence="1">3.6.1.-</ecNumber>
    </recommendedName>
</protein>
<accession>A2BZC2</accession>
<organism>
    <name type="scientific">Prochlorococcus marinus (strain NATL1A)</name>
    <dbReference type="NCBI Taxonomy" id="167555"/>
    <lineage>
        <taxon>Bacteria</taxon>
        <taxon>Bacillati</taxon>
        <taxon>Cyanobacteriota</taxon>
        <taxon>Cyanophyceae</taxon>
        <taxon>Synechococcales</taxon>
        <taxon>Prochlorococcaceae</taxon>
        <taxon>Prochlorococcus</taxon>
    </lineage>
</organism>
<proteinExistence type="inferred from homology"/>
<reference key="1">
    <citation type="journal article" date="2007" name="PLoS Genet.">
        <title>Patterns and implications of gene gain and loss in the evolution of Prochlorococcus.</title>
        <authorList>
            <person name="Kettler G.C."/>
            <person name="Martiny A.C."/>
            <person name="Huang K."/>
            <person name="Zucker J."/>
            <person name="Coleman M.L."/>
            <person name="Rodrigue S."/>
            <person name="Chen F."/>
            <person name="Lapidus A."/>
            <person name="Ferriera S."/>
            <person name="Johnson J."/>
            <person name="Steglich C."/>
            <person name="Church G.M."/>
            <person name="Richardson P."/>
            <person name="Chisholm S.W."/>
        </authorList>
    </citation>
    <scope>NUCLEOTIDE SEQUENCE [LARGE SCALE GENOMIC DNA]</scope>
    <source>
        <strain>NATL1A</strain>
    </source>
</reference>